<protein>
    <recommendedName>
        <fullName>Hemocyanin II</fullName>
    </recommendedName>
</protein>
<evidence type="ECO:0000255" key="1"/>
<evidence type="ECO:0000269" key="2">
    <source>
    </source>
</evidence>
<evidence type="ECO:0000269" key="3">
    <source>
    </source>
</evidence>
<evidence type="ECO:0000305" key="4"/>
<evidence type="ECO:0007829" key="5">
    <source>
        <dbReference type="PDB" id="1LLA"/>
    </source>
</evidence>
<evidence type="ECO:0007829" key="6">
    <source>
        <dbReference type="PDB" id="1NOL"/>
    </source>
</evidence>
<evidence type="ECO:0007829" key="7">
    <source>
        <dbReference type="PDB" id="1OXY"/>
    </source>
</evidence>
<comment type="function">
    <text>Hemocyanins are copper-containing oxygen carriers occurring freely dissolved in the hemolymph of many mollusks and arthropods.</text>
</comment>
<comment type="subunit">
    <text>Hexamer or a multiple thereof.</text>
</comment>
<comment type="subcellular location">
    <subcellularLocation>
        <location>Secreted</location>
        <location>Extracellular space</location>
    </subcellularLocation>
</comment>
<comment type="tissue specificity">
    <text>Hemolymph.</text>
</comment>
<comment type="similarity">
    <text evidence="4">Belongs to the tyrosinase family. Hemocyanin subfamily.</text>
</comment>
<keyword id="KW-0002">3D-structure</keyword>
<keyword id="KW-0186">Copper</keyword>
<keyword id="KW-0903">Direct protein sequencing</keyword>
<keyword id="KW-1015">Disulfide bond</keyword>
<keyword id="KW-0325">Glycoprotein</keyword>
<keyword id="KW-0479">Metal-binding</keyword>
<keyword id="KW-0561">Oxygen transport</keyword>
<keyword id="KW-0964">Secreted</keyword>
<keyword id="KW-0813">Transport</keyword>
<accession>P04253</accession>
<sequence length="628" mass="72629">TLHDKQIRVCHLFEQLSSATVIGDGDKHKHSDRLKNVGKLQPGAIFSCFHPDHLEEARHLYEVFWEAGDFNDFIEIAKEARTFVNEGLFAFAAEVAVLHRDDCKGLYVPPVQEIFPDKFIPSAAINEAFKKAHVRPEFDESPILVDVQDTGNILDPEYRLAYYREDVGINAHHWHWHLVYPSTWNPKYFGKKKDRKGELFYYMHQQMCARYDCERLSNGMHRMLPFNNFDEPLAGYAPHLTHVASGKYYSPRPDGLKLRDLGDIEISEMVRMRERILDSIHLGYVISEDGSHKTLDELHGTDILGALVESSYESVNHEYYGNLHNWGHVTMARIHDPDGRFHEEPGVMSDTSTSLRDPIFYNWHRFIDNIFHEYKNTLKPYDHDVLNFPDIQVQDVTLHARVDNVVHFTMREQELELKHGINPGNARSIKARYYHLDHEPFSYAVNVQNNSASDKHATVRIFLAPKYDELGNEIKADELRRTAIELDKFKTDLHPGKNTVVRHSLDSSVTLSHQPTFEDLLHGVGLNEHKSEYCSCGWPSHLLVPKGNIKGMEYHLFVMLTDWDKDKVDGSESVACVDAVSYCGARDHKYPDKKPMGFPFDRPIHTEHISDFLTNNMFIKDIKIKFHE</sequence>
<name>HCY2_LIMPO</name>
<organism>
    <name type="scientific">Limulus polyphemus</name>
    <name type="common">Atlantic horseshoe crab</name>
    <dbReference type="NCBI Taxonomy" id="6850"/>
    <lineage>
        <taxon>Eukaryota</taxon>
        <taxon>Metazoa</taxon>
        <taxon>Ecdysozoa</taxon>
        <taxon>Arthropoda</taxon>
        <taxon>Chelicerata</taxon>
        <taxon>Merostomata</taxon>
        <taxon>Xiphosura</taxon>
        <taxon>Limulidae</taxon>
        <taxon>Limulus</taxon>
    </lineage>
</organism>
<proteinExistence type="evidence at protein level"/>
<feature type="chain" id="PRO_0000204281" description="Hemocyanin II">
    <location>
        <begin position="1"/>
        <end position="628"/>
    </location>
</feature>
<feature type="binding site" evidence="3">
    <location>
        <position position="173"/>
    </location>
    <ligand>
        <name>Cu cation</name>
        <dbReference type="ChEBI" id="CHEBI:23378"/>
        <label>1</label>
    </ligand>
</feature>
<feature type="binding site" evidence="3">
    <location>
        <position position="177"/>
    </location>
    <ligand>
        <name>Cu cation</name>
        <dbReference type="ChEBI" id="CHEBI:23378"/>
        <label>1</label>
    </ligand>
</feature>
<feature type="binding site" evidence="3">
    <location>
        <position position="204"/>
    </location>
    <ligand>
        <name>Cu cation</name>
        <dbReference type="ChEBI" id="CHEBI:23378"/>
        <label>1</label>
    </ligand>
</feature>
<feature type="binding site" evidence="3">
    <location>
        <position position="324"/>
    </location>
    <ligand>
        <name>Cu cation</name>
        <dbReference type="ChEBI" id="CHEBI:23378"/>
        <label>2</label>
    </ligand>
</feature>
<feature type="binding site" evidence="3">
    <location>
        <position position="328"/>
    </location>
    <ligand>
        <name>Cu cation</name>
        <dbReference type="ChEBI" id="CHEBI:23378"/>
        <label>2</label>
    </ligand>
</feature>
<feature type="binding site" evidence="3">
    <location>
        <position position="364"/>
    </location>
    <ligand>
        <name>Cu cation</name>
        <dbReference type="ChEBI" id="CHEBI:23378"/>
        <label>2</label>
    </ligand>
</feature>
<feature type="modified residue" description="Blocked amino end (Thr); partial" evidence="2">
    <location>
        <position position="1"/>
    </location>
</feature>
<feature type="glycosylation site" description="N-linked (GlcNAc...) asparagine" evidence="1">
    <location>
        <position position="449"/>
    </location>
</feature>
<feature type="disulfide bond">
    <location>
        <begin position="534"/>
        <end position="576"/>
    </location>
</feature>
<feature type="disulfide bond">
    <location>
        <begin position="536"/>
        <end position="583"/>
    </location>
</feature>
<feature type="helix" evidence="5">
    <location>
        <begin position="3"/>
        <end position="13"/>
    </location>
</feature>
<feature type="helix" evidence="5">
    <location>
        <begin position="16"/>
        <end position="18"/>
    </location>
</feature>
<feature type="helix" evidence="5">
    <location>
        <begin position="33"/>
        <end position="36"/>
    </location>
</feature>
<feature type="strand" evidence="5">
    <location>
        <begin position="48"/>
        <end position="50"/>
    </location>
</feature>
<feature type="helix" evidence="5">
    <location>
        <begin position="51"/>
        <end position="65"/>
    </location>
</feature>
<feature type="strand" evidence="7">
    <location>
        <begin position="67"/>
        <end position="69"/>
    </location>
</feature>
<feature type="helix" evidence="5">
    <location>
        <begin position="70"/>
        <end position="80"/>
    </location>
</feature>
<feature type="turn" evidence="5">
    <location>
        <begin position="81"/>
        <end position="83"/>
    </location>
</feature>
<feature type="helix" evidence="5">
    <location>
        <begin position="86"/>
        <end position="99"/>
    </location>
</feature>
<feature type="helix" evidence="5">
    <location>
        <begin position="101"/>
        <end position="103"/>
    </location>
</feature>
<feature type="helix" evidence="5">
    <location>
        <begin position="111"/>
        <end position="114"/>
    </location>
</feature>
<feature type="helix" evidence="5">
    <location>
        <begin position="116"/>
        <end position="118"/>
    </location>
</feature>
<feature type="helix" evidence="5">
    <location>
        <begin position="122"/>
        <end position="130"/>
    </location>
</feature>
<feature type="strand" evidence="5">
    <location>
        <begin position="143"/>
        <end position="146"/>
    </location>
</feature>
<feature type="helix" evidence="5">
    <location>
        <begin position="156"/>
        <end position="160"/>
    </location>
</feature>
<feature type="helix" evidence="5">
    <location>
        <begin position="161"/>
        <end position="164"/>
    </location>
</feature>
<feature type="helix" evidence="5">
    <location>
        <begin position="167"/>
        <end position="179"/>
    </location>
</feature>
<feature type="helix" evidence="5">
    <location>
        <begin position="186"/>
        <end position="189"/>
    </location>
</feature>
<feature type="helix" evidence="5">
    <location>
        <begin position="196"/>
        <end position="217"/>
    </location>
</feature>
<feature type="turn" evidence="5">
    <location>
        <begin position="243"/>
        <end position="245"/>
    </location>
</feature>
<feature type="helix" evidence="5">
    <location>
        <begin position="266"/>
        <end position="282"/>
    </location>
</feature>
<feature type="strand" evidence="5">
    <location>
        <begin position="284"/>
        <end position="286"/>
    </location>
</feature>
<feature type="strand" evidence="5">
    <location>
        <begin position="292"/>
        <end position="294"/>
    </location>
</feature>
<feature type="turn" evidence="5">
    <location>
        <begin position="297"/>
        <end position="299"/>
    </location>
</feature>
<feature type="helix" evidence="5">
    <location>
        <begin position="300"/>
        <end position="309"/>
    </location>
</feature>
<feature type="helix" evidence="5">
    <location>
        <begin position="317"/>
        <end position="320"/>
    </location>
</feature>
<feature type="helix" evidence="5">
    <location>
        <begin position="323"/>
        <end position="332"/>
    </location>
</feature>
<feature type="turn" evidence="5">
    <location>
        <begin position="333"/>
        <end position="335"/>
    </location>
</feature>
<feature type="helix" evidence="5">
    <location>
        <begin position="347"/>
        <end position="349"/>
    </location>
</feature>
<feature type="turn" evidence="5">
    <location>
        <begin position="351"/>
        <end position="353"/>
    </location>
</feature>
<feature type="helix" evidence="5">
    <location>
        <begin position="354"/>
        <end position="356"/>
    </location>
</feature>
<feature type="helix" evidence="5">
    <location>
        <begin position="358"/>
        <end position="375"/>
    </location>
</feature>
<feature type="helix" evidence="5">
    <location>
        <begin position="383"/>
        <end position="386"/>
    </location>
</feature>
<feature type="strand" evidence="5">
    <location>
        <begin position="391"/>
        <end position="402"/>
    </location>
</feature>
<feature type="strand" evidence="5">
    <location>
        <begin position="405"/>
        <end position="416"/>
    </location>
</feature>
<feature type="turn" evidence="5">
    <location>
        <begin position="418"/>
        <end position="420"/>
    </location>
</feature>
<feature type="strand" evidence="5">
    <location>
        <begin position="429"/>
        <end position="438"/>
    </location>
</feature>
<feature type="strand" evidence="5">
    <location>
        <begin position="442"/>
        <end position="449"/>
    </location>
</feature>
<feature type="strand" evidence="5">
    <location>
        <begin position="451"/>
        <end position="453"/>
    </location>
</feature>
<feature type="strand" evidence="5">
    <location>
        <begin position="455"/>
        <end position="467"/>
    </location>
</feature>
<feature type="helix" evidence="5">
    <location>
        <begin position="476"/>
        <end position="482"/>
    </location>
</feature>
<feature type="strand" evidence="5">
    <location>
        <begin position="484"/>
        <end position="493"/>
    </location>
</feature>
<feature type="strand" evidence="5">
    <location>
        <begin position="495"/>
        <end position="503"/>
    </location>
</feature>
<feature type="helix" evidence="5">
    <location>
        <begin position="504"/>
        <end position="506"/>
    </location>
</feature>
<feature type="strand" evidence="6">
    <location>
        <begin position="510"/>
        <end position="512"/>
    </location>
</feature>
<feature type="helix" evidence="5">
    <location>
        <begin position="517"/>
        <end position="521"/>
    </location>
</feature>
<feature type="strand" evidence="5">
    <location>
        <begin position="537"/>
        <end position="539"/>
    </location>
</feature>
<feature type="helix" evidence="5">
    <location>
        <begin position="540"/>
        <end position="542"/>
    </location>
</feature>
<feature type="strand" evidence="7">
    <location>
        <begin position="548"/>
        <end position="550"/>
    </location>
</feature>
<feature type="strand" evidence="5">
    <location>
        <begin position="552"/>
        <end position="562"/>
    </location>
</feature>
<feature type="helix" evidence="5">
    <location>
        <begin position="563"/>
        <end position="566"/>
    </location>
</feature>
<feature type="helix" evidence="5">
    <location>
        <begin position="580"/>
        <end position="583"/>
    </location>
</feature>
<feature type="turn" evidence="5">
    <location>
        <begin position="596"/>
        <end position="599"/>
    </location>
</feature>
<feature type="strand" evidence="5">
    <location>
        <begin position="600"/>
        <end position="602"/>
    </location>
</feature>
<feature type="strand" evidence="5">
    <location>
        <begin position="606"/>
        <end position="608"/>
    </location>
</feature>
<feature type="helix" evidence="5">
    <location>
        <begin position="609"/>
        <end position="611"/>
    </location>
</feature>
<feature type="strand" evidence="5">
    <location>
        <begin position="617"/>
        <end position="626"/>
    </location>
</feature>
<dbReference type="PIR" id="A26713">
    <property type="entry name" value="BHHC2A"/>
</dbReference>
<dbReference type="PDB" id="1LL1">
    <property type="method" value="X-ray"/>
    <property type="resolution" value="2.55 A"/>
    <property type="chains" value="A=1-628"/>
</dbReference>
<dbReference type="PDB" id="1LLA">
    <property type="method" value="X-ray"/>
    <property type="resolution" value="2.18 A"/>
    <property type="chains" value="A=1-628"/>
</dbReference>
<dbReference type="PDB" id="1NOL">
    <property type="method" value="X-ray"/>
    <property type="resolution" value="2.40 A"/>
    <property type="chains" value="A=1-628"/>
</dbReference>
<dbReference type="PDB" id="1OXY">
    <property type="method" value="X-ray"/>
    <property type="resolution" value="2.40 A"/>
    <property type="chains" value="A=1-628"/>
</dbReference>
<dbReference type="PDBsum" id="1LL1"/>
<dbReference type="PDBsum" id="1LLA"/>
<dbReference type="PDBsum" id="1NOL"/>
<dbReference type="PDBsum" id="1OXY"/>
<dbReference type="SMR" id="P04253"/>
<dbReference type="OrthoDB" id="8119704at2759"/>
<dbReference type="EvolutionaryTrace" id="P04253"/>
<dbReference type="Proteomes" id="UP000694941">
    <property type="component" value="Unplaced"/>
</dbReference>
<dbReference type="GO" id="GO:0005576">
    <property type="term" value="C:extracellular region"/>
    <property type="evidence" value="ECO:0007669"/>
    <property type="project" value="UniProtKB-SubCell"/>
</dbReference>
<dbReference type="GO" id="GO:0031404">
    <property type="term" value="F:chloride ion binding"/>
    <property type="evidence" value="ECO:0000314"/>
    <property type="project" value="UniProtKB"/>
</dbReference>
<dbReference type="GO" id="GO:0005507">
    <property type="term" value="F:copper ion binding"/>
    <property type="evidence" value="ECO:0000314"/>
    <property type="project" value="UniProtKB"/>
</dbReference>
<dbReference type="GO" id="GO:0016491">
    <property type="term" value="F:oxidoreductase activity"/>
    <property type="evidence" value="ECO:0007669"/>
    <property type="project" value="InterPro"/>
</dbReference>
<dbReference type="GO" id="GO:0005344">
    <property type="term" value="F:oxygen carrier activity"/>
    <property type="evidence" value="ECO:0000303"/>
    <property type="project" value="UniProtKB"/>
</dbReference>
<dbReference type="GO" id="GO:0015671">
    <property type="term" value="P:oxygen transport"/>
    <property type="evidence" value="ECO:0000303"/>
    <property type="project" value="UniProtKB"/>
</dbReference>
<dbReference type="FunFam" id="1.10.1280.10:FF:000004">
    <property type="entry name" value="Hemocyanin subunit 2"/>
    <property type="match status" value="1"/>
</dbReference>
<dbReference type="FunFam" id="2.60.40.1520:FF:000001">
    <property type="entry name" value="Hemocyanin subunit 2"/>
    <property type="match status" value="1"/>
</dbReference>
<dbReference type="FunFam" id="1.20.1370.10:FF:000002">
    <property type="entry name" value="Hemocyanin subunit B"/>
    <property type="match status" value="1"/>
</dbReference>
<dbReference type="Gene3D" id="1.10.1280.10">
    <property type="entry name" value="Di-copper center containing domain from catechol oxidase"/>
    <property type="match status" value="1"/>
</dbReference>
<dbReference type="Gene3D" id="2.60.40.1520">
    <property type="entry name" value="Hemocyanin, C-terminal domain"/>
    <property type="match status" value="1"/>
</dbReference>
<dbReference type="Gene3D" id="1.20.1370.10">
    <property type="entry name" value="Hemocyanin, N-terminal domain"/>
    <property type="match status" value="1"/>
</dbReference>
<dbReference type="InterPro" id="IPR008922">
    <property type="entry name" value="Di-copper_centre_dom_sf"/>
</dbReference>
<dbReference type="InterPro" id="IPR013788">
    <property type="entry name" value="Hemocyanin/hexamerin"/>
</dbReference>
<dbReference type="InterPro" id="IPR000896">
    <property type="entry name" value="Hemocyanin/hexamerin_mid_dom"/>
</dbReference>
<dbReference type="InterPro" id="IPR005203">
    <property type="entry name" value="Hemocyanin_C"/>
</dbReference>
<dbReference type="InterPro" id="IPR037020">
    <property type="entry name" value="Hemocyanin_C_sf"/>
</dbReference>
<dbReference type="InterPro" id="IPR005204">
    <property type="entry name" value="Hemocyanin_N"/>
</dbReference>
<dbReference type="InterPro" id="IPR036697">
    <property type="entry name" value="Hemocyanin_N_sf"/>
</dbReference>
<dbReference type="InterPro" id="IPR014756">
    <property type="entry name" value="Ig_E-set"/>
</dbReference>
<dbReference type="InterPro" id="IPR002227">
    <property type="entry name" value="Tyrosinase_Cu-bd"/>
</dbReference>
<dbReference type="PANTHER" id="PTHR11511:SF5">
    <property type="entry name" value="FAT-BODY PROTEIN 1-RELATED"/>
    <property type="match status" value="1"/>
</dbReference>
<dbReference type="PANTHER" id="PTHR11511">
    <property type="entry name" value="LARVAL STORAGE PROTEIN/PHENOLOXIDASE"/>
    <property type="match status" value="1"/>
</dbReference>
<dbReference type="Pfam" id="PF03723">
    <property type="entry name" value="Hemocyanin_C"/>
    <property type="match status" value="1"/>
</dbReference>
<dbReference type="Pfam" id="PF00372">
    <property type="entry name" value="Hemocyanin_M"/>
    <property type="match status" value="1"/>
</dbReference>
<dbReference type="Pfam" id="PF03722">
    <property type="entry name" value="Hemocyanin_N"/>
    <property type="match status" value="1"/>
</dbReference>
<dbReference type="PRINTS" id="PR00187">
    <property type="entry name" value="HAEMOCYANIN"/>
</dbReference>
<dbReference type="SUPFAM" id="SSF48056">
    <property type="entry name" value="Di-copper centre-containing domain"/>
    <property type="match status" value="1"/>
</dbReference>
<dbReference type="SUPFAM" id="SSF81296">
    <property type="entry name" value="E set domains"/>
    <property type="match status" value="1"/>
</dbReference>
<dbReference type="SUPFAM" id="SSF48050">
    <property type="entry name" value="Hemocyanin, N-terminal domain"/>
    <property type="match status" value="1"/>
</dbReference>
<dbReference type="PROSITE" id="PS00209">
    <property type="entry name" value="HEMOCYANIN_1"/>
    <property type="match status" value="1"/>
</dbReference>
<dbReference type="PROSITE" id="PS00210">
    <property type="entry name" value="HEMOCYANIN_2"/>
    <property type="match status" value="1"/>
</dbReference>
<dbReference type="PROSITE" id="PS00498">
    <property type="entry name" value="TYROSINASE_2"/>
    <property type="match status" value="1"/>
</dbReference>
<reference key="1">
    <citation type="journal article" date="1986" name="J. Biol. Chem.">
        <title>Structure of hemocyanin II from the horseshoe crab, Limulus polyphemus. Sequences of the overlapping peptides, ordering the CNBr fragments, and the complete amino acid sequence.</title>
        <authorList>
            <person name="Nakashima H."/>
            <person name="Behrens P.Q."/>
            <person name="Moore M.D."/>
            <person name="Yokota E."/>
            <person name="Riggs A.F."/>
        </authorList>
    </citation>
    <scope>PROTEIN SEQUENCE</scope>
</reference>
<reference key="2">
    <citation type="journal article" date="1984" name="J. Biol. Chem.">
        <title>The structure of the hemocyanin from the horseshoe crab, Limulus polyphemus. The amino acid sequence of the largest cyanogen bromide fragment.</title>
        <authorList>
            <person name="Yokota E."/>
            <person name="Riggs A.F."/>
        </authorList>
    </citation>
    <scope>PROTEIN SEQUENCE OF 1-203</scope>
</reference>
<reference key="3">
    <citation type="journal article" date="1991" name="Proteins">
        <title>Hexamers of subunit II from Limulus hemocyanin (a 48-mer) have the same quaternary structure as whole Panulirus hemocyanin molecules.</title>
        <authorList>
            <person name="Magnus K.A."/>
            <person name="Lattman E.E."/>
            <person name="Volbeda A."/>
            <person name="Hol W.G.J."/>
        </authorList>
    </citation>
    <scope>X-RAY CRYSTALLOGRAPHY (2.2 ANGSTROMS)</scope>
</reference>
<reference key="4">
    <citation type="journal article" date="1993" name="Protein Sci.">
        <title>Crystal structure of deoxygenated Limulus polyphemus subunit II hemocyanin at 2.18-A resolution: clues for a mechanism for allosteric regulation.</title>
        <authorList>
            <person name="Hazes B."/>
            <person name="Magnus K.A."/>
            <person name="Bonaventura C."/>
            <person name="Bonaventura J."/>
            <person name="Dauter Z."/>
            <person name="Kalk K.H."/>
            <person name="Hol W.G.J."/>
        </authorList>
    </citation>
    <scope>X-RAY CRYSTALLOGRAPHY (2.18 ANGSTROMS)</scope>
</reference>